<comment type="function">
    <text evidence="2">Photosystem II (PSII) is a light-driven water:plastoquinone oxidoreductase that uses light energy to abstract electrons from H(2)O, generating O(2) and a proton gradient subsequently used for ATP formation. It consists of a core antenna complex that captures photons, and an electron transfer chain that converts photonic excitation into a charge separation. The D1/D2 (PsbA/PsbD) reaction center heterodimer binds P680, the primary electron donor of PSII as well as several subsequent electron acceptors. D2 is needed for assembly of a stable PSII complex.</text>
</comment>
<comment type="catalytic activity">
    <reaction evidence="2">
        <text>2 a plastoquinone + 4 hnu + 2 H2O = 2 a plastoquinol + O2</text>
        <dbReference type="Rhea" id="RHEA:36359"/>
        <dbReference type="Rhea" id="RHEA-COMP:9561"/>
        <dbReference type="Rhea" id="RHEA-COMP:9562"/>
        <dbReference type="ChEBI" id="CHEBI:15377"/>
        <dbReference type="ChEBI" id="CHEBI:15379"/>
        <dbReference type="ChEBI" id="CHEBI:17757"/>
        <dbReference type="ChEBI" id="CHEBI:30212"/>
        <dbReference type="ChEBI" id="CHEBI:62192"/>
        <dbReference type="EC" id="1.10.3.9"/>
    </reaction>
</comment>
<comment type="cofactor">
    <text evidence="2">The D1/D2 heterodimer binds P680, chlorophylls that are the primary electron donor of PSII, and subsequent electron acceptors. It shares a non-heme iron and each subunit binds pheophytin, quinone, additional chlorophylls, carotenoids and lipids. There is also a Cl(-1) ion associated with D1 and D2, which is required for oxygen evolution. The PSII complex binds additional chlorophylls, carotenoids and specific lipids.</text>
</comment>
<comment type="subunit">
    <text evidence="2">PSII is composed of 1 copy each of membrane proteins PsbA, PsbB, PsbC, PsbD, PsbE, PsbF, PsbH, PsbI, PsbJ, PsbK, PsbL, PsbM, PsbT, PsbX, PsbY, PsbZ, Psb30/Ycf12, at least 3 peripheral proteins of the oxygen-evolving complex and a large number of cofactors. It forms dimeric complexes.</text>
</comment>
<comment type="subcellular location">
    <subcellularLocation>
        <location evidence="2">Plastid</location>
        <location evidence="2">Chloroplast thylakoid membrane</location>
        <topology evidence="2">Multi-pass membrane protein</topology>
    </subcellularLocation>
</comment>
<comment type="miscellaneous">
    <text evidence="2">2 of the reaction center chlorophylls (ChlD1 and ChlD2) are entirely coordinated by water.</text>
</comment>
<comment type="similarity">
    <text evidence="2">Belongs to the reaction center PufL/M/PsbA/D family.</text>
</comment>
<keyword id="KW-0007">Acetylation</keyword>
<keyword id="KW-0148">Chlorophyll</keyword>
<keyword id="KW-0150">Chloroplast</keyword>
<keyword id="KW-0157">Chromophore</keyword>
<keyword id="KW-0249">Electron transport</keyword>
<keyword id="KW-0408">Iron</keyword>
<keyword id="KW-0460">Magnesium</keyword>
<keyword id="KW-0472">Membrane</keyword>
<keyword id="KW-0479">Metal-binding</keyword>
<keyword id="KW-0560">Oxidoreductase</keyword>
<keyword id="KW-0597">Phosphoprotein</keyword>
<keyword id="KW-0602">Photosynthesis</keyword>
<keyword id="KW-0604">Photosystem II</keyword>
<keyword id="KW-0934">Plastid</keyword>
<keyword id="KW-0793">Thylakoid</keyword>
<keyword id="KW-0812">Transmembrane</keyword>
<keyword id="KW-1133">Transmembrane helix</keyword>
<keyword id="KW-0813">Transport</keyword>
<accession>Q1KVW6</accession>
<gene>
    <name evidence="2" type="primary">psbD</name>
</gene>
<reference key="1">
    <citation type="journal article" date="2006" name="BMC Evol. Biol.">
        <title>The complete chloroplast genome sequence of the chlorophycean green alga Scenedesmus obliquus reveals a compact gene organization and a biased distribution of genes on the two DNA strands.</title>
        <authorList>
            <person name="de Cambiaire J.-C."/>
            <person name="Otis C."/>
            <person name="Lemieux C."/>
            <person name="Turmel M."/>
        </authorList>
    </citation>
    <scope>NUCLEOTIDE SEQUENCE [LARGE SCALE GENOMIC DNA]</scope>
    <source>
        <strain>UTEX 393</strain>
    </source>
</reference>
<geneLocation type="chloroplast"/>
<proteinExistence type="inferred from homology"/>
<name>PSBD_TETOB</name>
<sequence length="353" mass="39628">MTIAIGSTYQEKRTWFDDADDWLRQDRFVFVGWSGLLLFPCAYFALGGWFTGTTFVTSWYTHGLATSYLEGCNFLTAAVSTPANSMAHSLLFLWGPEAQGDFTRWCQLGGLWTFVALHGSFGLIGFMLRQFEIARSVNLRPYNAIAFSAPIAVFVSVFLIYPLGQSGWFFAPSFGVAAIFRFILFFQGFHNWTLNPFHMMGVAGVLGAALLCAIHGATVENTLFEDGDGANTFRAFNPTQAEETYSMVTANRFWSQIFGVAFSNKRWLHFFMLLVPVTGLWMSAIGVVGLALNLRAYDFVSQEIRAAEDPEFETFYTKNILLNEGIRAWMAAQDQPHERLVFPEEVLPRGNAL</sequence>
<feature type="initiator methionine" description="Removed" evidence="1">
    <location>
        <position position="1"/>
    </location>
</feature>
<feature type="chain" id="PRO_0000359694" description="Photosystem II D2 protein">
    <location>
        <begin position="2"/>
        <end position="353"/>
    </location>
</feature>
<feature type="transmembrane region" description="Helical" evidence="2">
    <location>
        <begin position="41"/>
        <end position="61"/>
    </location>
</feature>
<feature type="transmembrane region" description="Helical" evidence="2">
    <location>
        <begin position="125"/>
        <end position="141"/>
    </location>
</feature>
<feature type="transmembrane region" description="Helical" evidence="2">
    <location>
        <begin position="153"/>
        <end position="166"/>
    </location>
</feature>
<feature type="transmembrane region" description="Helical" evidence="2">
    <location>
        <begin position="208"/>
        <end position="228"/>
    </location>
</feature>
<feature type="transmembrane region" description="Helical" evidence="2">
    <location>
        <begin position="279"/>
        <end position="295"/>
    </location>
</feature>
<feature type="binding site" description="axial binding residue" evidence="2">
    <location>
        <position position="118"/>
    </location>
    <ligand>
        <name>chlorophyll a</name>
        <dbReference type="ChEBI" id="CHEBI:58416"/>
        <label>ChlzD2</label>
    </ligand>
    <ligandPart>
        <name>Mg</name>
        <dbReference type="ChEBI" id="CHEBI:25107"/>
    </ligandPart>
</feature>
<feature type="binding site" evidence="2">
    <location>
        <position position="130"/>
    </location>
    <ligand>
        <name>pheophytin a</name>
        <dbReference type="ChEBI" id="CHEBI:136840"/>
        <label>D2</label>
    </ligand>
</feature>
<feature type="binding site" evidence="2">
    <location>
        <position position="143"/>
    </location>
    <ligand>
        <name>pheophytin a</name>
        <dbReference type="ChEBI" id="CHEBI:136840"/>
        <label>D2</label>
    </ligand>
</feature>
<feature type="binding site" description="axial binding residue" evidence="2">
    <location>
        <position position="198"/>
    </location>
    <ligand>
        <name>chlorophyll a</name>
        <dbReference type="ChEBI" id="CHEBI:58416"/>
        <label>PD2</label>
    </ligand>
    <ligandPart>
        <name>Mg</name>
        <dbReference type="ChEBI" id="CHEBI:25107"/>
    </ligandPart>
</feature>
<feature type="binding site" evidence="2">
    <location>
        <position position="215"/>
    </location>
    <ligand>
        <name>a plastoquinone</name>
        <dbReference type="ChEBI" id="CHEBI:17757"/>
        <label>Q(A)</label>
    </ligand>
</feature>
<feature type="binding site" evidence="2">
    <location>
        <position position="215"/>
    </location>
    <ligand>
        <name>Fe cation</name>
        <dbReference type="ChEBI" id="CHEBI:24875"/>
        <note>ligand shared with heterodimeric partner</note>
    </ligand>
</feature>
<feature type="binding site" evidence="2">
    <location>
        <position position="262"/>
    </location>
    <ligand>
        <name>a plastoquinone</name>
        <dbReference type="ChEBI" id="CHEBI:17757"/>
        <label>Q(A)</label>
    </ligand>
</feature>
<feature type="binding site" evidence="2">
    <location>
        <position position="269"/>
    </location>
    <ligand>
        <name>Fe cation</name>
        <dbReference type="ChEBI" id="CHEBI:24875"/>
        <note>ligand shared with heterodimeric partner</note>
    </ligand>
</feature>
<feature type="modified residue" description="N-acetylthreonine" evidence="1">
    <location>
        <position position="2"/>
    </location>
</feature>
<feature type="modified residue" description="Phosphothreonine" evidence="1">
    <location>
        <position position="2"/>
    </location>
</feature>
<evidence type="ECO:0000250" key="1">
    <source>
        <dbReference type="UniProtKB" id="P56761"/>
    </source>
</evidence>
<evidence type="ECO:0000255" key="2">
    <source>
        <dbReference type="HAMAP-Rule" id="MF_01383"/>
    </source>
</evidence>
<dbReference type="EC" id="1.10.3.9" evidence="2"/>
<dbReference type="EMBL" id="DQ396875">
    <property type="protein sequence ID" value="ABD48240.1"/>
    <property type="molecule type" value="Genomic_DNA"/>
</dbReference>
<dbReference type="RefSeq" id="YP_635958.1">
    <property type="nucleotide sequence ID" value="NC_008101.1"/>
</dbReference>
<dbReference type="SMR" id="Q1KVW6"/>
<dbReference type="GeneID" id="4099825"/>
<dbReference type="GO" id="GO:0009535">
    <property type="term" value="C:chloroplast thylakoid membrane"/>
    <property type="evidence" value="ECO:0007669"/>
    <property type="project" value="UniProtKB-SubCell"/>
</dbReference>
<dbReference type="GO" id="GO:0009523">
    <property type="term" value="C:photosystem II"/>
    <property type="evidence" value="ECO:0007669"/>
    <property type="project" value="UniProtKB-KW"/>
</dbReference>
<dbReference type="GO" id="GO:0016168">
    <property type="term" value="F:chlorophyll binding"/>
    <property type="evidence" value="ECO:0007669"/>
    <property type="project" value="UniProtKB-UniRule"/>
</dbReference>
<dbReference type="GO" id="GO:0045156">
    <property type="term" value="F:electron transporter, transferring electrons within the cyclic electron transport pathway of photosynthesis activity"/>
    <property type="evidence" value="ECO:0007669"/>
    <property type="project" value="InterPro"/>
</dbReference>
<dbReference type="GO" id="GO:0005506">
    <property type="term" value="F:iron ion binding"/>
    <property type="evidence" value="ECO:0007669"/>
    <property type="project" value="UniProtKB-UniRule"/>
</dbReference>
<dbReference type="GO" id="GO:0010242">
    <property type="term" value="F:oxygen evolving activity"/>
    <property type="evidence" value="ECO:0007669"/>
    <property type="project" value="UniProtKB-EC"/>
</dbReference>
<dbReference type="GO" id="GO:0009772">
    <property type="term" value="P:photosynthetic electron transport in photosystem II"/>
    <property type="evidence" value="ECO:0007669"/>
    <property type="project" value="InterPro"/>
</dbReference>
<dbReference type="CDD" id="cd09288">
    <property type="entry name" value="Photosystem-II_D2"/>
    <property type="match status" value="1"/>
</dbReference>
<dbReference type="FunFam" id="1.20.85.10:FF:000001">
    <property type="entry name" value="photosystem II D2 protein-like"/>
    <property type="match status" value="1"/>
</dbReference>
<dbReference type="Gene3D" id="1.20.85.10">
    <property type="entry name" value="Photosystem II protein D1-like"/>
    <property type="match status" value="1"/>
</dbReference>
<dbReference type="HAMAP" id="MF_01383">
    <property type="entry name" value="PSII_PsbD_D2"/>
    <property type="match status" value="1"/>
</dbReference>
<dbReference type="InterPro" id="IPR055266">
    <property type="entry name" value="D1/D2"/>
</dbReference>
<dbReference type="InterPro" id="IPR036854">
    <property type="entry name" value="Photo_II_D1/D2_sf"/>
</dbReference>
<dbReference type="InterPro" id="IPR000484">
    <property type="entry name" value="Photo_RC_L/M"/>
</dbReference>
<dbReference type="InterPro" id="IPR055265">
    <property type="entry name" value="Photo_RC_L/M_CS"/>
</dbReference>
<dbReference type="InterPro" id="IPR005868">
    <property type="entry name" value="PSII_PsbD/D2"/>
</dbReference>
<dbReference type="NCBIfam" id="TIGR01152">
    <property type="entry name" value="psbD"/>
    <property type="match status" value="1"/>
</dbReference>
<dbReference type="PANTHER" id="PTHR33149:SF12">
    <property type="entry name" value="PHOTOSYSTEM II D2 PROTEIN"/>
    <property type="match status" value="1"/>
</dbReference>
<dbReference type="PANTHER" id="PTHR33149">
    <property type="entry name" value="PHOTOSYSTEM II PROTEIN D1"/>
    <property type="match status" value="1"/>
</dbReference>
<dbReference type="Pfam" id="PF00124">
    <property type="entry name" value="Photo_RC"/>
    <property type="match status" value="1"/>
</dbReference>
<dbReference type="PRINTS" id="PR00256">
    <property type="entry name" value="REACTNCENTRE"/>
</dbReference>
<dbReference type="SUPFAM" id="SSF81483">
    <property type="entry name" value="Bacterial photosystem II reaction centre, L and M subunits"/>
    <property type="match status" value="1"/>
</dbReference>
<dbReference type="PROSITE" id="PS00244">
    <property type="entry name" value="REACTION_CENTER"/>
    <property type="match status" value="1"/>
</dbReference>
<protein>
    <recommendedName>
        <fullName evidence="2">Photosystem II D2 protein</fullName>
        <shortName evidence="2">PSII D2 protein</shortName>
        <ecNumber evidence="2">1.10.3.9</ecNumber>
    </recommendedName>
    <alternativeName>
        <fullName evidence="2">Photosystem Q(A) protein</fullName>
    </alternativeName>
</protein>
<organism>
    <name type="scientific">Tetradesmus obliquus</name>
    <name type="common">Green alga</name>
    <name type="synonym">Acutodesmus obliquus</name>
    <dbReference type="NCBI Taxonomy" id="3088"/>
    <lineage>
        <taxon>Eukaryota</taxon>
        <taxon>Viridiplantae</taxon>
        <taxon>Chlorophyta</taxon>
        <taxon>core chlorophytes</taxon>
        <taxon>Chlorophyceae</taxon>
        <taxon>CS clade</taxon>
        <taxon>Sphaeropleales</taxon>
        <taxon>Scenedesmaceae</taxon>
        <taxon>Tetradesmus</taxon>
    </lineage>
</organism>